<feature type="initiator methionine" description="Removed" evidence="4">
    <location>
        <position position="1"/>
    </location>
</feature>
<feature type="chain" id="PRO_0000125348" description="Large ribosomal subunit protein uL22B">
    <location>
        <begin position="2"/>
        <end position="184"/>
    </location>
</feature>
<feature type="modified residue" description="Phosphothreonine" evidence="1">
    <location>
        <position position="70"/>
    </location>
</feature>
<feature type="cross-link" description="Glycyl lysine isopeptide (Lys-Gly) (interchain with G-Cter in ubiquitin)" evidence="11">
    <location>
        <position position="46"/>
    </location>
</feature>
<dbReference type="EMBL" id="Z49452">
    <property type="protein sequence ID" value="CAA89472.1"/>
    <property type="molecule type" value="Genomic_DNA"/>
</dbReference>
<dbReference type="EMBL" id="BK006943">
    <property type="protein sequence ID" value="DAA08628.1"/>
    <property type="molecule type" value="Genomic_DNA"/>
</dbReference>
<dbReference type="PIR" id="S56960">
    <property type="entry name" value="S56960"/>
</dbReference>
<dbReference type="RefSeq" id="NP_012358.1">
    <property type="nucleotide sequence ID" value="NM_001181610.1"/>
</dbReference>
<dbReference type="SMR" id="P46990"/>
<dbReference type="BioGRID" id="33584">
    <property type="interactions" value="343"/>
</dbReference>
<dbReference type="ComplexPortal" id="CPX-1601">
    <property type="entry name" value="60S cytosolic large ribosomal subunit"/>
</dbReference>
<dbReference type="FunCoup" id="P46990">
    <property type="interactions" value="1102"/>
</dbReference>
<dbReference type="IntAct" id="P46990">
    <property type="interactions" value="125"/>
</dbReference>
<dbReference type="MINT" id="P46990"/>
<dbReference type="STRING" id="4932.YJL177W"/>
<dbReference type="CarbonylDB" id="P46990"/>
<dbReference type="iPTMnet" id="P46990"/>
<dbReference type="PaxDb" id="4932-YJL177W"/>
<dbReference type="PeptideAtlas" id="P46990"/>
<dbReference type="EnsemblFungi" id="YJL177W_mRNA">
    <property type="protein sequence ID" value="YJL177W"/>
    <property type="gene ID" value="YJL177W"/>
</dbReference>
<dbReference type="GeneID" id="853262"/>
<dbReference type="KEGG" id="sce:YJL177W"/>
<dbReference type="AGR" id="SGD:S000003713"/>
<dbReference type="SGD" id="S000003713">
    <property type="gene designation" value="RPL17B"/>
</dbReference>
<dbReference type="VEuPathDB" id="FungiDB:YJL177W"/>
<dbReference type="eggNOG" id="KOG3353">
    <property type="taxonomic scope" value="Eukaryota"/>
</dbReference>
<dbReference type="GeneTree" id="ENSGT00950000183010"/>
<dbReference type="HOGENOM" id="CLU_083987_0_0_1"/>
<dbReference type="InParanoid" id="P46990"/>
<dbReference type="OMA" id="QVNHAPC"/>
<dbReference type="OrthoDB" id="10254664at2759"/>
<dbReference type="BioCyc" id="YEAST:G3O-31612-MONOMER"/>
<dbReference type="Reactome" id="R-SCE-156827">
    <property type="pathway name" value="L13a-mediated translational silencing of Ceruloplasmin expression"/>
</dbReference>
<dbReference type="Reactome" id="R-SCE-1799339">
    <property type="pathway name" value="SRP-dependent cotranslational protein targeting to membrane"/>
</dbReference>
<dbReference type="Reactome" id="R-SCE-72689">
    <property type="pathway name" value="Formation of a pool of free 40S subunits"/>
</dbReference>
<dbReference type="Reactome" id="R-SCE-72706">
    <property type="pathway name" value="GTP hydrolysis and joining of the 60S ribosomal subunit"/>
</dbReference>
<dbReference type="Reactome" id="R-SCE-975956">
    <property type="pathway name" value="Nonsense Mediated Decay (NMD) independent of the Exon Junction Complex (EJC)"/>
</dbReference>
<dbReference type="Reactome" id="R-SCE-975957">
    <property type="pathway name" value="Nonsense Mediated Decay (NMD) enhanced by the Exon Junction Complex (EJC)"/>
</dbReference>
<dbReference type="BioGRID-ORCS" id="853262">
    <property type="hits" value="2 hits in 10 CRISPR screens"/>
</dbReference>
<dbReference type="PRO" id="PR:P46990"/>
<dbReference type="Proteomes" id="UP000002311">
    <property type="component" value="Chromosome X"/>
</dbReference>
<dbReference type="RNAct" id="P46990">
    <property type="molecule type" value="protein"/>
</dbReference>
<dbReference type="GO" id="GO:0005829">
    <property type="term" value="C:cytosol"/>
    <property type="evidence" value="ECO:0000304"/>
    <property type="project" value="Reactome"/>
</dbReference>
<dbReference type="GO" id="GO:0022625">
    <property type="term" value="C:cytosolic large ribosomal subunit"/>
    <property type="evidence" value="ECO:0000314"/>
    <property type="project" value="SGD"/>
</dbReference>
<dbReference type="GO" id="GO:0030687">
    <property type="term" value="C:preribosome, large subunit precursor"/>
    <property type="evidence" value="ECO:0000314"/>
    <property type="project" value="SGD"/>
</dbReference>
<dbReference type="GO" id="GO:0003735">
    <property type="term" value="F:structural constituent of ribosome"/>
    <property type="evidence" value="ECO:0000314"/>
    <property type="project" value="SGD"/>
</dbReference>
<dbReference type="GO" id="GO:0000448">
    <property type="term" value="P:cleavage in ITS2 between 5.8S rRNA and LSU-rRNA of tricistronic rRNA transcript (SSU-rRNA, 5.8S rRNA, LSU-rRNA)"/>
    <property type="evidence" value="ECO:0000316"/>
    <property type="project" value="SGD"/>
</dbReference>
<dbReference type="GO" id="GO:0002181">
    <property type="term" value="P:cytoplasmic translation"/>
    <property type="evidence" value="ECO:0000314"/>
    <property type="project" value="SGD"/>
</dbReference>
<dbReference type="CDD" id="cd00336">
    <property type="entry name" value="Ribosomal_L22"/>
    <property type="match status" value="1"/>
</dbReference>
<dbReference type="FunFam" id="3.90.470.10:FF:000010">
    <property type="entry name" value="60S ribosomal protein L17"/>
    <property type="match status" value="1"/>
</dbReference>
<dbReference type="Gene3D" id="3.90.470.10">
    <property type="entry name" value="Ribosomal protein L22/L17"/>
    <property type="match status" value="1"/>
</dbReference>
<dbReference type="InterPro" id="IPR001063">
    <property type="entry name" value="Ribosomal_uL22"/>
</dbReference>
<dbReference type="InterPro" id="IPR018260">
    <property type="entry name" value="Ribosomal_uL22_CS"/>
</dbReference>
<dbReference type="InterPro" id="IPR005721">
    <property type="entry name" value="Ribosomal_uL22_euk/arc"/>
</dbReference>
<dbReference type="InterPro" id="IPR036394">
    <property type="entry name" value="Ribosomal_uL22_sf"/>
</dbReference>
<dbReference type="NCBIfam" id="TIGR01038">
    <property type="entry name" value="uL22_arch_euk"/>
    <property type="match status" value="1"/>
</dbReference>
<dbReference type="PANTHER" id="PTHR11593">
    <property type="entry name" value="60S RIBOSOMAL PROTEIN L17"/>
    <property type="match status" value="1"/>
</dbReference>
<dbReference type="PANTHER" id="PTHR11593:SF10">
    <property type="entry name" value="60S RIBOSOMAL PROTEIN L17"/>
    <property type="match status" value="1"/>
</dbReference>
<dbReference type="Pfam" id="PF00237">
    <property type="entry name" value="Ribosomal_L22"/>
    <property type="match status" value="1"/>
</dbReference>
<dbReference type="SUPFAM" id="SSF54843">
    <property type="entry name" value="Ribosomal protein L22"/>
    <property type="match status" value="1"/>
</dbReference>
<dbReference type="PROSITE" id="PS00464">
    <property type="entry name" value="RIBOSOMAL_L22"/>
    <property type="match status" value="1"/>
</dbReference>
<protein>
    <recommendedName>
        <fullName evidence="6">Large ribosomal subunit protein uL22B</fullName>
    </recommendedName>
    <alternativeName>
        <fullName evidence="7">60S ribosomal protein L17-B</fullName>
    </alternativeName>
    <alternativeName>
        <fullName>L20</fullName>
    </alternativeName>
    <alternativeName>
        <fullName>YL17</fullName>
    </alternativeName>
</protein>
<reference key="1">
    <citation type="journal article" date="1996" name="EMBO J.">
        <title>Complete nucleotide sequence of Saccharomyces cerevisiae chromosome X.</title>
        <authorList>
            <person name="Galibert F."/>
            <person name="Alexandraki D."/>
            <person name="Baur A."/>
            <person name="Boles E."/>
            <person name="Chalwatzis N."/>
            <person name="Chuat J.-C."/>
            <person name="Coster F."/>
            <person name="Cziepluch C."/>
            <person name="de Haan M."/>
            <person name="Domdey H."/>
            <person name="Durand P."/>
            <person name="Entian K.-D."/>
            <person name="Gatius M."/>
            <person name="Goffeau A."/>
            <person name="Grivell L.A."/>
            <person name="Hennemann A."/>
            <person name="Herbert C.J."/>
            <person name="Heumann K."/>
            <person name="Hilger F."/>
            <person name="Hollenberg C.P."/>
            <person name="Huang M.-E."/>
            <person name="Jacq C."/>
            <person name="Jauniaux J.-C."/>
            <person name="Katsoulou C."/>
            <person name="Kirchrath L."/>
            <person name="Kleine K."/>
            <person name="Kordes E."/>
            <person name="Koetter P."/>
            <person name="Liebl S."/>
            <person name="Louis E.J."/>
            <person name="Manus V."/>
            <person name="Mewes H.-W."/>
            <person name="Miosga T."/>
            <person name="Obermaier B."/>
            <person name="Perea J."/>
            <person name="Pohl T.M."/>
            <person name="Portetelle D."/>
            <person name="Pujol A."/>
            <person name="Purnelle B."/>
            <person name="Ramezani Rad M."/>
            <person name="Rasmussen S.W."/>
            <person name="Rose M."/>
            <person name="Rossau R."/>
            <person name="Schaaff-Gerstenschlaeger I."/>
            <person name="Smits P.H.M."/>
            <person name="Scarcez T."/>
            <person name="Soriano N."/>
            <person name="To Van D."/>
            <person name="Tzermia M."/>
            <person name="Van Broekhoven A."/>
            <person name="Vandenbol M."/>
            <person name="Wedler H."/>
            <person name="von Wettstein D."/>
            <person name="Wambutt R."/>
            <person name="Zagulski M."/>
            <person name="Zollner A."/>
            <person name="Karpfinger-Hartl L."/>
        </authorList>
    </citation>
    <scope>NUCLEOTIDE SEQUENCE [LARGE SCALE GENOMIC DNA]</scope>
    <source>
        <strain>ATCC 204508 / S288c</strain>
    </source>
</reference>
<reference key="2">
    <citation type="journal article" date="2014" name="G3 (Bethesda)">
        <title>The reference genome sequence of Saccharomyces cerevisiae: Then and now.</title>
        <authorList>
            <person name="Engel S.R."/>
            <person name="Dietrich F.S."/>
            <person name="Fisk D.G."/>
            <person name="Binkley G."/>
            <person name="Balakrishnan R."/>
            <person name="Costanzo M.C."/>
            <person name="Dwight S.S."/>
            <person name="Hitz B.C."/>
            <person name="Karra K."/>
            <person name="Nash R.S."/>
            <person name="Weng S."/>
            <person name="Wong E.D."/>
            <person name="Lloyd P."/>
            <person name="Skrzypek M.S."/>
            <person name="Miyasato S.R."/>
            <person name="Simison M."/>
            <person name="Cherry J.M."/>
        </authorList>
    </citation>
    <scope>GENOME REANNOTATION</scope>
    <source>
        <strain>ATCC 204508 / S288c</strain>
    </source>
</reference>
<reference key="3">
    <citation type="journal article" date="1984" name="Mol. Gen. Genet.">
        <title>Yeast ribosomal proteins. VIII. Isolation of two proteins and sequence characterization of twenty-four proteins from cytoplasmic ribosomes.</title>
        <authorList>
            <person name="Otaka E."/>
            <person name="Higo K."/>
            <person name="Itoh T."/>
        </authorList>
    </citation>
    <scope>PARTIAL PROTEIN SEQUENCE OF 2-41</scope>
    <scope>CLEAVAGE OF INITIATOR METHIONINE</scope>
</reference>
<reference key="4">
    <citation type="journal article" date="1998" name="Yeast">
        <title>The list of cytoplasmic ribosomal proteins of Saccharomyces cerevisiae.</title>
        <authorList>
            <person name="Planta R.J."/>
            <person name="Mager W.H."/>
        </authorList>
    </citation>
    <scope>NOMENCLATURE</scope>
    <scope>SUBUNIT</scope>
</reference>
<reference key="5">
    <citation type="journal article" date="2003" name="Nature">
        <title>Global analysis of protein localization in budding yeast.</title>
        <authorList>
            <person name="Huh W.-K."/>
            <person name="Falvo J.V."/>
            <person name="Gerke L.C."/>
            <person name="Carroll A.S."/>
            <person name="Howson R.W."/>
            <person name="Weissman J.S."/>
            <person name="O'Shea E.K."/>
        </authorList>
    </citation>
    <scope>SUBCELLULAR LOCATION [LARGE SCALE ANALYSIS]</scope>
</reference>
<reference key="6">
    <citation type="journal article" date="2003" name="Nature">
        <title>Global analysis of protein expression in yeast.</title>
        <authorList>
            <person name="Ghaemmaghami S."/>
            <person name="Huh W.-K."/>
            <person name="Bower K."/>
            <person name="Howson R.W."/>
            <person name="Belle A."/>
            <person name="Dephoure N."/>
            <person name="O'Shea E.K."/>
            <person name="Weissman J.S."/>
        </authorList>
    </citation>
    <scope>LEVEL OF PROTEIN EXPRESSION [LARGE SCALE ANALYSIS]</scope>
</reference>
<reference key="7">
    <citation type="journal article" date="2007" name="Proc. Natl. Acad. Sci. U.S.A.">
        <title>Analysis of phosphorylation sites on proteins from Saccharomyces cerevisiae by electron transfer dissociation (ETD) mass spectrometry.</title>
        <authorList>
            <person name="Chi A."/>
            <person name="Huttenhower C."/>
            <person name="Geer L.Y."/>
            <person name="Coon J.J."/>
            <person name="Syka J.E.P."/>
            <person name="Bai D.L."/>
            <person name="Shabanowitz J."/>
            <person name="Burke D.J."/>
            <person name="Troyanskaya O.G."/>
            <person name="Hunt D.F."/>
        </authorList>
    </citation>
    <scope>IDENTIFICATION BY MASS SPECTROMETRY [LARGE SCALE ANALYSIS]</scope>
</reference>
<reference key="8">
    <citation type="journal article" date="2011" name="Science">
        <title>The structure of the eukaryotic ribosome at 3.0 A resolution.</title>
        <authorList>
            <person name="Ben-Shem A."/>
            <person name="Garreau de Loubresse N."/>
            <person name="Melnikov S."/>
            <person name="Jenner L."/>
            <person name="Yusupova G."/>
            <person name="Yusupov M."/>
        </authorList>
    </citation>
    <scope>SUBUNIT</scope>
    <scope>SUBCELLULAR LOCATION</scope>
</reference>
<reference key="9">
    <citation type="journal article" date="2012" name="Proteomics">
        <title>Sites of ubiquitin attachment in Saccharomyces cerevisiae.</title>
        <authorList>
            <person name="Starita L.M."/>
            <person name="Lo R.S."/>
            <person name="Eng J.K."/>
            <person name="von Haller P.D."/>
            <person name="Fields S."/>
        </authorList>
    </citation>
    <scope>UBIQUITINATION [LARGE SCALE ANALYSIS] AT LYS-46</scope>
    <scope>IDENTIFICATION BY MASS SPECTROMETRY [LARGE SCALE ANALYSIS]</scope>
</reference>
<reference key="10">
    <citation type="journal article" date="2014" name="Curr. Opin. Struct. Biol.">
        <title>A new system for naming ribosomal proteins.</title>
        <authorList>
            <person name="Ban N."/>
            <person name="Beckmann R."/>
            <person name="Cate J.H.D."/>
            <person name="Dinman J.D."/>
            <person name="Dragon F."/>
            <person name="Ellis S.R."/>
            <person name="Lafontaine D.L.J."/>
            <person name="Lindahl L."/>
            <person name="Liljas A."/>
            <person name="Lipton J.M."/>
            <person name="McAlear M.A."/>
            <person name="Moore P.B."/>
            <person name="Noller H.F."/>
            <person name="Ortega J."/>
            <person name="Panse V.G."/>
            <person name="Ramakrishnan V."/>
            <person name="Spahn C.M.T."/>
            <person name="Steitz T.A."/>
            <person name="Tchorzewski M."/>
            <person name="Tollervey D."/>
            <person name="Warren A.J."/>
            <person name="Williamson J.R."/>
            <person name="Wilson D."/>
            <person name="Yonath A."/>
            <person name="Yusupov M."/>
        </authorList>
    </citation>
    <scope>NOMENCLATURE</scope>
</reference>
<accession>P46990</accession>
<accession>D6VW12</accession>
<proteinExistence type="evidence at protein level"/>
<sequence>MARYGATSTNPAKSASARGSYLRVSFKNTRETAQAINGWELTKAQKYLDQVLDHQRAIPFRRFNSSIGRTAQGKEFGVTKARWPAKSVKFVQGLLQNAAANAEAKGLDATKLYVSHIQVNQAPKQRRRTYRAHGRINKYESSPSHIELVVTEKEEAVAKAAEKKVVRLTSRQRGRIAAQKRISA</sequence>
<comment type="function">
    <text evidence="9">Component of the ribosome, a large ribonucleoprotein complex responsible for the synthesis of proteins in the cell. The small ribosomal subunit (SSU) binds messenger RNAs (mRNAs) and translates the encoded message by selecting cognate aminoacyl-transfer RNA (tRNA) molecules. The large subunit (LSU) contains the ribosomal catalytic site termed the peptidyl transferase center (PTC), which catalyzes the formation of peptide bonds, thereby polymerizing the amino acids delivered by tRNAs into a polypeptide chain. The nascent polypeptides leave the ribosome through a tunnel in the LSU and interact with protein factors that function in enzymatic processing, targeting, and the membrane insertion of nascent chains at the exit of the ribosomal tunnel.</text>
</comment>
<comment type="subunit">
    <text evidence="5 10">Component of the large ribosomal subunit (LSU). Mature yeast ribosomes consist of a small (40S) and a large (60S) subunit. The 40S small subunit contains 1 molecule of ribosomal RNA (18S rRNA) and 33 different proteins (encoded by 57 genes). The large 60S subunit contains 3 rRNA molecules (25S, 5.8S and 5S rRNA) and 46 different proteins (encoded by 81 genes). uL22 is associated with the polypeptide exit tunnel (PubMed:22096102, PubMed:9559554).</text>
</comment>
<comment type="subcellular location">
    <subcellularLocation>
        <location evidence="2 5">Cytoplasm</location>
    </subcellularLocation>
</comment>
<comment type="miscellaneous">
    <text evidence="3">Present with 21100 molecules/cell in log phase SD medium.</text>
</comment>
<comment type="miscellaneous">
    <text evidence="8">There are 2 genes for uL22 in yeast.</text>
</comment>
<comment type="similarity">
    <text evidence="8">Belongs to the universal ribosomal protein uL22 family.</text>
</comment>
<gene>
    <name evidence="7" type="primary">RPL17B</name>
    <name type="synonym">RPL20B</name>
    <name type="ordered locus">YJL177W</name>
    <name type="ORF">J0493</name>
</gene>
<name>RL17B_YEAST</name>
<organism>
    <name type="scientific">Saccharomyces cerevisiae (strain ATCC 204508 / S288c)</name>
    <name type="common">Baker's yeast</name>
    <dbReference type="NCBI Taxonomy" id="559292"/>
    <lineage>
        <taxon>Eukaryota</taxon>
        <taxon>Fungi</taxon>
        <taxon>Dikarya</taxon>
        <taxon>Ascomycota</taxon>
        <taxon>Saccharomycotina</taxon>
        <taxon>Saccharomycetes</taxon>
        <taxon>Saccharomycetales</taxon>
        <taxon>Saccharomycetaceae</taxon>
        <taxon>Saccharomyces</taxon>
    </lineage>
</organism>
<keyword id="KW-0963">Cytoplasm</keyword>
<keyword id="KW-0903">Direct protein sequencing</keyword>
<keyword id="KW-1017">Isopeptide bond</keyword>
<keyword id="KW-0597">Phosphoprotein</keyword>
<keyword id="KW-1185">Reference proteome</keyword>
<keyword id="KW-0687">Ribonucleoprotein</keyword>
<keyword id="KW-0689">Ribosomal protein</keyword>
<keyword id="KW-0832">Ubl conjugation</keyword>
<evidence type="ECO:0000250" key="1">
    <source>
        <dbReference type="UniProtKB" id="P05740"/>
    </source>
</evidence>
<evidence type="ECO:0000269" key="2">
    <source>
    </source>
</evidence>
<evidence type="ECO:0000269" key="3">
    <source>
    </source>
</evidence>
<evidence type="ECO:0000269" key="4">
    <source>
    </source>
</evidence>
<evidence type="ECO:0000269" key="5">
    <source>
    </source>
</evidence>
<evidence type="ECO:0000303" key="6">
    <source>
    </source>
</evidence>
<evidence type="ECO:0000303" key="7">
    <source>
    </source>
</evidence>
<evidence type="ECO:0000305" key="8"/>
<evidence type="ECO:0000305" key="9">
    <source>
    </source>
</evidence>
<evidence type="ECO:0000305" key="10">
    <source>
    </source>
</evidence>
<evidence type="ECO:0007744" key="11">
    <source>
    </source>
</evidence>